<dbReference type="EMBL" id="X16720">
    <property type="protein sequence ID" value="CAA34692.1"/>
    <property type="molecule type" value="Genomic_DNA"/>
</dbReference>
<dbReference type="PIR" id="S05616">
    <property type="entry name" value="R3MX4"/>
</dbReference>
<dbReference type="SMR" id="P14023"/>
<dbReference type="OMA" id="GHIQLNL"/>
<dbReference type="GO" id="GO:0022627">
    <property type="term" value="C:cytosolic small ribosomal subunit"/>
    <property type="evidence" value="ECO:0007669"/>
    <property type="project" value="TreeGrafter"/>
</dbReference>
<dbReference type="GO" id="GO:0019843">
    <property type="term" value="F:rRNA binding"/>
    <property type="evidence" value="ECO:0007669"/>
    <property type="project" value="UniProtKB-KW"/>
</dbReference>
<dbReference type="GO" id="GO:0003735">
    <property type="term" value="F:structural constituent of ribosome"/>
    <property type="evidence" value="ECO:0007669"/>
    <property type="project" value="InterPro"/>
</dbReference>
<dbReference type="GO" id="GO:0006412">
    <property type="term" value="P:translation"/>
    <property type="evidence" value="ECO:0007669"/>
    <property type="project" value="UniProtKB-UniRule"/>
</dbReference>
<dbReference type="CDD" id="cd06087">
    <property type="entry name" value="KOW_RPS4"/>
    <property type="match status" value="1"/>
</dbReference>
<dbReference type="CDD" id="cd00165">
    <property type="entry name" value="S4"/>
    <property type="match status" value="1"/>
</dbReference>
<dbReference type="FunFam" id="3.10.290.10:FF:000002">
    <property type="entry name" value="40S ribosomal protein S4"/>
    <property type="match status" value="1"/>
</dbReference>
<dbReference type="Gene3D" id="2.30.30.30">
    <property type="match status" value="1"/>
</dbReference>
<dbReference type="Gene3D" id="2.40.50.740">
    <property type="match status" value="1"/>
</dbReference>
<dbReference type="Gene3D" id="3.10.290.10">
    <property type="entry name" value="RNA-binding S4 domain"/>
    <property type="match status" value="1"/>
</dbReference>
<dbReference type="HAMAP" id="MF_00485">
    <property type="entry name" value="Ribosomal_eS4"/>
    <property type="match status" value="1"/>
</dbReference>
<dbReference type="InterPro" id="IPR005824">
    <property type="entry name" value="KOW"/>
</dbReference>
<dbReference type="InterPro" id="IPR014722">
    <property type="entry name" value="Rib_uL2_dom2"/>
</dbReference>
<dbReference type="InterPro" id="IPR000876">
    <property type="entry name" value="Ribosomal_eS4"/>
</dbReference>
<dbReference type="InterPro" id="IPR013845">
    <property type="entry name" value="Ribosomal_eS4_central_region"/>
</dbReference>
<dbReference type="InterPro" id="IPR038237">
    <property type="entry name" value="Ribosomal_eS4_central_sf"/>
</dbReference>
<dbReference type="InterPro" id="IPR041982">
    <property type="entry name" value="Ribosomal_eS4_KOW"/>
</dbReference>
<dbReference type="InterPro" id="IPR013843">
    <property type="entry name" value="Ribosomal_eS4_N"/>
</dbReference>
<dbReference type="InterPro" id="IPR018199">
    <property type="entry name" value="Ribosomal_eS4_N_CS"/>
</dbReference>
<dbReference type="InterPro" id="IPR002942">
    <property type="entry name" value="S4_RNA-bd"/>
</dbReference>
<dbReference type="InterPro" id="IPR036986">
    <property type="entry name" value="S4_RNA-bd_sf"/>
</dbReference>
<dbReference type="NCBIfam" id="NF003312">
    <property type="entry name" value="PRK04313.1"/>
    <property type="match status" value="1"/>
</dbReference>
<dbReference type="PANTHER" id="PTHR11581">
    <property type="entry name" value="30S/40S RIBOSOMAL PROTEIN S4"/>
    <property type="match status" value="1"/>
</dbReference>
<dbReference type="PANTHER" id="PTHR11581:SF0">
    <property type="entry name" value="SMALL RIBOSOMAL SUBUNIT PROTEIN ES4"/>
    <property type="match status" value="1"/>
</dbReference>
<dbReference type="Pfam" id="PF00467">
    <property type="entry name" value="KOW"/>
    <property type="match status" value="1"/>
</dbReference>
<dbReference type="Pfam" id="PF00900">
    <property type="entry name" value="Ribosomal_S4e"/>
    <property type="match status" value="1"/>
</dbReference>
<dbReference type="Pfam" id="PF08071">
    <property type="entry name" value="RS4NT"/>
    <property type="match status" value="1"/>
</dbReference>
<dbReference type="Pfam" id="PF01479">
    <property type="entry name" value="S4"/>
    <property type="match status" value="1"/>
</dbReference>
<dbReference type="PIRSF" id="PIRSF002116">
    <property type="entry name" value="Ribosomal_S4"/>
    <property type="match status" value="1"/>
</dbReference>
<dbReference type="PROSITE" id="PS00528">
    <property type="entry name" value="RIBOSOMAL_S4E"/>
    <property type="match status" value="1"/>
</dbReference>
<dbReference type="PROSITE" id="PS50889">
    <property type="entry name" value="S4"/>
    <property type="match status" value="1"/>
</dbReference>
<protein>
    <recommendedName>
        <fullName evidence="1">Small ribosomal subunit protein eS4</fullName>
    </recommendedName>
    <alternativeName>
        <fullName>30S ribosomal protein S4e</fullName>
    </alternativeName>
</protein>
<sequence>MAIKGPRKHLKRLAAPANWQLPRKERTFTVRPSPGPHSMDKSLPLLLIVRDTLKCADNAREAKKIIQMGKILIDGVKRKEYKHPVGLMDVLSIPELNENYLVLFDENGRISLKKTEKTGVKLCKIVNKTVIKGGHIQLNLHDGRNQIVKVANALKAEEDIYKTGDSVLVSLPEQAVVGHVEFNEGKLAYITGGKHVGEFAKVVEVEKRTLYSDIVTLENKDGEKFKTIKPYVFIVGQDEPVISM</sequence>
<reference key="1">
    <citation type="journal article" date="1989" name="J. Mol. Biol.">
        <title>Organization and structure of the Methanococcus transcriptional unit homologous to the Escherichia coli 'spectinomycin operon'. Implications for the evolutionary relationship of 70 S and 80 S ribosomes.</title>
        <authorList>
            <person name="Auer J."/>
            <person name="Spicker G."/>
            <person name="Boeck A."/>
        </authorList>
    </citation>
    <scope>NUCLEOTIDE SEQUENCE [GENOMIC DNA]</scope>
</reference>
<accession>P14023</accession>
<feature type="chain" id="PRO_0000130854" description="Small ribosomal subunit protein eS4">
    <location>
        <begin position="1"/>
        <end position="244"/>
    </location>
</feature>
<feature type="domain" description="S4 RNA-binding">
    <location>
        <begin position="43"/>
        <end position="106"/>
    </location>
</feature>
<comment type="similarity">
    <text evidence="1">Belongs to the eukaryotic ribosomal protein eS4 family.</text>
</comment>
<proteinExistence type="inferred from homology"/>
<evidence type="ECO:0000305" key="1"/>
<keyword id="KW-0687">Ribonucleoprotein</keyword>
<keyword id="KW-0689">Ribosomal protein</keyword>
<keyword id="KW-0694">RNA-binding</keyword>
<keyword id="KW-0699">rRNA-binding</keyword>
<name>RS4E_METVA</name>
<gene>
    <name type="primary">rps4e</name>
</gene>
<organism>
    <name type="scientific">Methanococcus vannielii</name>
    <dbReference type="NCBI Taxonomy" id="2187"/>
    <lineage>
        <taxon>Archaea</taxon>
        <taxon>Methanobacteriati</taxon>
        <taxon>Methanobacteriota</taxon>
        <taxon>Methanomada group</taxon>
        <taxon>Methanococci</taxon>
        <taxon>Methanococcales</taxon>
        <taxon>Methanococcaceae</taxon>
        <taxon>Methanococcus</taxon>
    </lineage>
</organism>